<accession>Q73P65</accession>
<reference key="1">
    <citation type="journal article" date="2004" name="Proc. Natl. Acad. Sci. U.S.A.">
        <title>Comparison of the genome of the oral pathogen Treponema denticola with other spirochete genomes.</title>
        <authorList>
            <person name="Seshadri R."/>
            <person name="Myers G.S.A."/>
            <person name="Tettelin H."/>
            <person name="Eisen J.A."/>
            <person name="Heidelberg J.F."/>
            <person name="Dodson R.J."/>
            <person name="Davidsen T.M."/>
            <person name="DeBoy R.T."/>
            <person name="Fouts D.E."/>
            <person name="Haft D.H."/>
            <person name="Selengut J."/>
            <person name="Ren Q."/>
            <person name="Brinkac L.M."/>
            <person name="Madupu R."/>
            <person name="Kolonay J.F."/>
            <person name="Durkin S.A."/>
            <person name="Daugherty S.C."/>
            <person name="Shetty J."/>
            <person name="Shvartsbeyn A."/>
            <person name="Gebregeorgis E."/>
            <person name="Geer K."/>
            <person name="Tsegaye G."/>
            <person name="Malek J.A."/>
            <person name="Ayodeji B."/>
            <person name="Shatsman S."/>
            <person name="McLeod M.P."/>
            <person name="Smajs D."/>
            <person name="Howell J.K."/>
            <person name="Pal S."/>
            <person name="Amin A."/>
            <person name="Vashisth P."/>
            <person name="McNeill T.Z."/>
            <person name="Xiang Q."/>
            <person name="Sodergren E."/>
            <person name="Baca E."/>
            <person name="Weinstock G.M."/>
            <person name="Norris S.J."/>
            <person name="Fraser C.M."/>
            <person name="Paulsen I.T."/>
        </authorList>
    </citation>
    <scope>NUCLEOTIDE SEQUENCE [LARGE SCALE GENOMIC DNA]</scope>
    <source>
        <strain>ATCC 35405 / DSM 14222 / CIP 103919 / JCM 8153 / KCTC 15104</strain>
    </source>
</reference>
<keyword id="KW-0143">Chaperone</keyword>
<keyword id="KW-0963">Cytoplasm</keyword>
<keyword id="KW-1185">Reference proteome</keyword>
<gene>
    <name evidence="1" type="primary">groES</name>
    <name evidence="1" type="synonym">groS</name>
    <name type="ordered locus">TDE_0934</name>
</gene>
<feature type="chain" id="PRO_0000174889" description="Co-chaperonin GroES">
    <location>
        <begin position="1"/>
        <end position="88"/>
    </location>
</feature>
<proteinExistence type="inferred from homology"/>
<dbReference type="EMBL" id="AE017226">
    <property type="protein sequence ID" value="AAS11425.1"/>
    <property type="molecule type" value="Genomic_DNA"/>
</dbReference>
<dbReference type="RefSeq" id="NP_971544.1">
    <property type="nucleotide sequence ID" value="NC_002967.9"/>
</dbReference>
<dbReference type="RefSeq" id="WP_002670325.1">
    <property type="nucleotide sequence ID" value="NC_002967.9"/>
</dbReference>
<dbReference type="SMR" id="Q73P65"/>
<dbReference type="STRING" id="243275.TDE_0934"/>
<dbReference type="PaxDb" id="243275-TDE_0934"/>
<dbReference type="GeneID" id="2740967"/>
<dbReference type="KEGG" id="tde:TDE_0934"/>
<dbReference type="PATRIC" id="fig|243275.7.peg.902"/>
<dbReference type="eggNOG" id="COG0234">
    <property type="taxonomic scope" value="Bacteria"/>
</dbReference>
<dbReference type="HOGENOM" id="CLU_132825_2_0_12"/>
<dbReference type="OrthoDB" id="9806791at2"/>
<dbReference type="Proteomes" id="UP000008212">
    <property type="component" value="Chromosome"/>
</dbReference>
<dbReference type="GO" id="GO:0005737">
    <property type="term" value="C:cytoplasm"/>
    <property type="evidence" value="ECO:0007669"/>
    <property type="project" value="UniProtKB-SubCell"/>
</dbReference>
<dbReference type="GO" id="GO:0005524">
    <property type="term" value="F:ATP binding"/>
    <property type="evidence" value="ECO:0007669"/>
    <property type="project" value="InterPro"/>
</dbReference>
<dbReference type="GO" id="GO:0046872">
    <property type="term" value="F:metal ion binding"/>
    <property type="evidence" value="ECO:0007669"/>
    <property type="project" value="TreeGrafter"/>
</dbReference>
<dbReference type="GO" id="GO:0044183">
    <property type="term" value="F:protein folding chaperone"/>
    <property type="evidence" value="ECO:0007669"/>
    <property type="project" value="InterPro"/>
</dbReference>
<dbReference type="GO" id="GO:0051087">
    <property type="term" value="F:protein-folding chaperone binding"/>
    <property type="evidence" value="ECO:0007669"/>
    <property type="project" value="TreeGrafter"/>
</dbReference>
<dbReference type="GO" id="GO:0051082">
    <property type="term" value="F:unfolded protein binding"/>
    <property type="evidence" value="ECO:0007669"/>
    <property type="project" value="TreeGrafter"/>
</dbReference>
<dbReference type="GO" id="GO:0051085">
    <property type="term" value="P:chaperone cofactor-dependent protein refolding"/>
    <property type="evidence" value="ECO:0007669"/>
    <property type="project" value="TreeGrafter"/>
</dbReference>
<dbReference type="CDD" id="cd00320">
    <property type="entry name" value="cpn10"/>
    <property type="match status" value="1"/>
</dbReference>
<dbReference type="FunFam" id="2.30.33.40:FF:000001">
    <property type="entry name" value="10 kDa chaperonin"/>
    <property type="match status" value="1"/>
</dbReference>
<dbReference type="Gene3D" id="2.30.33.40">
    <property type="entry name" value="GroES chaperonin"/>
    <property type="match status" value="1"/>
</dbReference>
<dbReference type="HAMAP" id="MF_00580">
    <property type="entry name" value="CH10"/>
    <property type="match status" value="1"/>
</dbReference>
<dbReference type="InterPro" id="IPR020818">
    <property type="entry name" value="Chaperonin_GroES"/>
</dbReference>
<dbReference type="InterPro" id="IPR037124">
    <property type="entry name" value="Chaperonin_GroES_sf"/>
</dbReference>
<dbReference type="InterPro" id="IPR018369">
    <property type="entry name" value="Chaprnonin_Cpn10_CS"/>
</dbReference>
<dbReference type="InterPro" id="IPR011032">
    <property type="entry name" value="GroES-like_sf"/>
</dbReference>
<dbReference type="NCBIfam" id="NF001531">
    <property type="entry name" value="PRK00364.2-2"/>
    <property type="match status" value="1"/>
</dbReference>
<dbReference type="PANTHER" id="PTHR10772">
    <property type="entry name" value="10 KDA HEAT SHOCK PROTEIN"/>
    <property type="match status" value="1"/>
</dbReference>
<dbReference type="PANTHER" id="PTHR10772:SF63">
    <property type="entry name" value="20 KDA CHAPERONIN, CHLOROPLASTIC"/>
    <property type="match status" value="1"/>
</dbReference>
<dbReference type="Pfam" id="PF00166">
    <property type="entry name" value="Cpn10"/>
    <property type="match status" value="1"/>
</dbReference>
<dbReference type="PRINTS" id="PR00297">
    <property type="entry name" value="CHAPERONIN10"/>
</dbReference>
<dbReference type="SMART" id="SM00883">
    <property type="entry name" value="Cpn10"/>
    <property type="match status" value="1"/>
</dbReference>
<dbReference type="SUPFAM" id="SSF50129">
    <property type="entry name" value="GroES-like"/>
    <property type="match status" value="1"/>
</dbReference>
<dbReference type="PROSITE" id="PS00681">
    <property type="entry name" value="CHAPERONINS_CPN10"/>
    <property type="match status" value="1"/>
</dbReference>
<sequence>MKVKPLGDRVLVKPDAVETKTAGGIIIPDTAQEKTQRGVVVAVGDDKEKIKVSVGQKVIHDKYAGTQIQIDGVDHLILKSNDLVAVVE</sequence>
<name>CH10_TREDE</name>
<evidence type="ECO:0000255" key="1">
    <source>
        <dbReference type="HAMAP-Rule" id="MF_00580"/>
    </source>
</evidence>
<organism>
    <name type="scientific">Treponema denticola (strain ATCC 35405 / DSM 14222 / CIP 103919 / JCM 8153 / KCTC 15104)</name>
    <dbReference type="NCBI Taxonomy" id="243275"/>
    <lineage>
        <taxon>Bacteria</taxon>
        <taxon>Pseudomonadati</taxon>
        <taxon>Spirochaetota</taxon>
        <taxon>Spirochaetia</taxon>
        <taxon>Spirochaetales</taxon>
        <taxon>Treponemataceae</taxon>
        <taxon>Treponema</taxon>
    </lineage>
</organism>
<protein>
    <recommendedName>
        <fullName evidence="1">Co-chaperonin GroES</fullName>
    </recommendedName>
    <alternativeName>
        <fullName evidence="1">10 kDa chaperonin</fullName>
    </alternativeName>
    <alternativeName>
        <fullName evidence="1">Chaperonin-10</fullName>
        <shortName evidence="1">Cpn10</shortName>
    </alternativeName>
</protein>
<comment type="function">
    <text evidence="1">Together with the chaperonin GroEL, plays an essential role in assisting protein folding. The GroEL-GroES system forms a nano-cage that allows encapsulation of the non-native substrate proteins and provides a physical environment optimized to promote and accelerate protein folding. GroES binds to the apical surface of the GroEL ring, thereby capping the opening of the GroEL channel.</text>
</comment>
<comment type="subunit">
    <text evidence="1">Heptamer of 7 subunits arranged in a ring. Interacts with the chaperonin GroEL.</text>
</comment>
<comment type="subcellular location">
    <subcellularLocation>
        <location evidence="1">Cytoplasm</location>
    </subcellularLocation>
</comment>
<comment type="similarity">
    <text evidence="1">Belongs to the GroES chaperonin family.</text>
</comment>